<name>DMS6_PHYTS</name>
<comment type="function">
    <text evidence="2">Antimicrobial peptide, active against the Gram-positive bacterium S.aureus, and the Gram-negative bacteria E.coli and P.aeruginosa. Has hemolytic activity at 612 uM.</text>
</comment>
<comment type="subcellular location">
    <subcellularLocation>
        <location evidence="2">Secreted</location>
    </subcellularLocation>
</comment>
<comment type="tissue specificity">
    <text evidence="2">Expressed by the skin glands.</text>
</comment>
<comment type="mass spectrometry" mass="2779.64" error="0.1" method="MALDI" evidence="2"/>
<comment type="similarity">
    <text evidence="1">Belongs to the frog skin active peptide (FSAP) family. Dermaseptin subfamily.</text>
</comment>
<accession>P84926</accession>
<sequence length="28" mass="2780">ALWKNMLKGIGKLAGQAALGAVKTLVGA</sequence>
<proteinExistence type="evidence at protein level"/>
<reference evidence="4" key="1">
    <citation type="submission" date="2006-08" db="UniProtKB">
        <title>Dermaseptins and phylloseptins from Phyllomedusa tarsius (Amphibia).</title>
        <authorList>
            <person name="Prates M.V."/>
            <person name="Jardim D.P."/>
            <person name="Silva L.P."/>
            <person name="Gordo M."/>
            <person name="Leite J.R.S.A."/>
            <person name="Figueredo R.C.R."/>
            <person name="Amaral A.C."/>
            <person name="Felipe M.S.S."/>
            <person name="Bloch C. Jr."/>
        </authorList>
    </citation>
    <scope>PROTEIN SEQUENCE</scope>
    <scope>FUNCTION</scope>
    <scope>SUBCELLULAR LOCATION</scope>
    <scope>TISSUE SPECIFICITY</scope>
    <scope>MASS SPECTROMETRY</scope>
    <source>
        <tissue evidence="2">Skin secretion</tissue>
    </source>
</reference>
<protein>
    <recommendedName>
        <fullName evidence="3">Dermaseptin-6</fullName>
        <shortName evidence="3">DStar 06</shortName>
    </recommendedName>
</protein>
<organism>
    <name type="scientific">Phyllomedusa tarsius</name>
    <name type="common">Brownbelly leaf frog</name>
    <name type="synonym">Phyllomedusa tarsia</name>
    <dbReference type="NCBI Taxonomy" id="306084"/>
    <lineage>
        <taxon>Eukaryota</taxon>
        <taxon>Metazoa</taxon>
        <taxon>Chordata</taxon>
        <taxon>Craniata</taxon>
        <taxon>Vertebrata</taxon>
        <taxon>Euteleostomi</taxon>
        <taxon>Amphibia</taxon>
        <taxon>Batrachia</taxon>
        <taxon>Anura</taxon>
        <taxon>Neobatrachia</taxon>
        <taxon>Hyloidea</taxon>
        <taxon>Hylidae</taxon>
        <taxon>Phyllomedusinae</taxon>
        <taxon>Phyllomedusa</taxon>
    </lineage>
</organism>
<feature type="peptide" id="PRO_0000376038" description="Dermaseptin-6" evidence="2">
    <location>
        <begin position="1"/>
        <end position="28"/>
    </location>
</feature>
<evidence type="ECO:0000255" key="1"/>
<evidence type="ECO:0000269" key="2">
    <source ref="1"/>
</evidence>
<evidence type="ECO:0000303" key="3">
    <source ref="1"/>
</evidence>
<evidence type="ECO:0000305" key="4"/>
<keyword id="KW-0878">Amphibian defense peptide</keyword>
<keyword id="KW-0044">Antibiotic</keyword>
<keyword id="KW-0929">Antimicrobial</keyword>
<keyword id="KW-0204">Cytolysis</keyword>
<keyword id="KW-0903">Direct protein sequencing</keyword>
<keyword id="KW-0354">Hemolysis</keyword>
<keyword id="KW-0964">Secreted</keyword>
<dbReference type="GO" id="GO:0005576">
    <property type="term" value="C:extracellular region"/>
    <property type="evidence" value="ECO:0007669"/>
    <property type="project" value="UniProtKB-SubCell"/>
</dbReference>
<dbReference type="GO" id="GO:0042742">
    <property type="term" value="P:defense response to bacterium"/>
    <property type="evidence" value="ECO:0007669"/>
    <property type="project" value="UniProtKB-KW"/>
</dbReference>
<dbReference type="GO" id="GO:0031640">
    <property type="term" value="P:killing of cells of another organism"/>
    <property type="evidence" value="ECO:0007669"/>
    <property type="project" value="UniProtKB-KW"/>
</dbReference>
<dbReference type="InterPro" id="IPR022731">
    <property type="entry name" value="Dermaseptin_dom"/>
</dbReference>
<dbReference type="Pfam" id="PF12121">
    <property type="entry name" value="DD_K"/>
    <property type="match status" value="1"/>
</dbReference>